<accession>Q2VYI5</accession>
<dbReference type="EC" id="3.4.25.2" evidence="1"/>
<dbReference type="EMBL" id="AP007255">
    <property type="protein sequence ID" value="BAE53340.1"/>
    <property type="molecule type" value="Genomic_DNA"/>
</dbReference>
<dbReference type="RefSeq" id="WP_011386880.1">
    <property type="nucleotide sequence ID" value="NC_007626.1"/>
</dbReference>
<dbReference type="SMR" id="Q2VYI5"/>
<dbReference type="STRING" id="342108.amb4536"/>
<dbReference type="MEROPS" id="T01.006"/>
<dbReference type="KEGG" id="mag:amb4536"/>
<dbReference type="HOGENOM" id="CLU_093872_1_0_5"/>
<dbReference type="OrthoDB" id="9804884at2"/>
<dbReference type="Proteomes" id="UP000007058">
    <property type="component" value="Chromosome"/>
</dbReference>
<dbReference type="GO" id="GO:0009376">
    <property type="term" value="C:HslUV protease complex"/>
    <property type="evidence" value="ECO:0007669"/>
    <property type="project" value="UniProtKB-UniRule"/>
</dbReference>
<dbReference type="GO" id="GO:0005839">
    <property type="term" value="C:proteasome core complex"/>
    <property type="evidence" value="ECO:0007669"/>
    <property type="project" value="InterPro"/>
</dbReference>
<dbReference type="GO" id="GO:0046872">
    <property type="term" value="F:metal ion binding"/>
    <property type="evidence" value="ECO:0007669"/>
    <property type="project" value="UniProtKB-KW"/>
</dbReference>
<dbReference type="GO" id="GO:0004298">
    <property type="term" value="F:threonine-type endopeptidase activity"/>
    <property type="evidence" value="ECO:0007669"/>
    <property type="project" value="UniProtKB-KW"/>
</dbReference>
<dbReference type="GO" id="GO:0051603">
    <property type="term" value="P:proteolysis involved in protein catabolic process"/>
    <property type="evidence" value="ECO:0007669"/>
    <property type="project" value="InterPro"/>
</dbReference>
<dbReference type="CDD" id="cd01913">
    <property type="entry name" value="protease_HslV"/>
    <property type="match status" value="1"/>
</dbReference>
<dbReference type="Gene3D" id="3.60.20.10">
    <property type="entry name" value="Glutamine Phosphoribosylpyrophosphate, subunit 1, domain 1"/>
    <property type="match status" value="1"/>
</dbReference>
<dbReference type="HAMAP" id="MF_00248">
    <property type="entry name" value="HslV"/>
    <property type="match status" value="1"/>
</dbReference>
<dbReference type="InterPro" id="IPR022281">
    <property type="entry name" value="ATP-dep_Prtase_HsIV_su"/>
</dbReference>
<dbReference type="InterPro" id="IPR029055">
    <property type="entry name" value="Ntn_hydrolases_N"/>
</dbReference>
<dbReference type="InterPro" id="IPR001353">
    <property type="entry name" value="Proteasome_sua/b"/>
</dbReference>
<dbReference type="InterPro" id="IPR023333">
    <property type="entry name" value="Proteasome_suB-type"/>
</dbReference>
<dbReference type="NCBIfam" id="TIGR03692">
    <property type="entry name" value="ATP_dep_HslV"/>
    <property type="match status" value="1"/>
</dbReference>
<dbReference type="NCBIfam" id="NF003964">
    <property type="entry name" value="PRK05456.1"/>
    <property type="match status" value="1"/>
</dbReference>
<dbReference type="PANTHER" id="PTHR32194:SF7">
    <property type="entry name" value="ATP-DEPENDENT PROTEASE SUBUNIT HSLV"/>
    <property type="match status" value="1"/>
</dbReference>
<dbReference type="PANTHER" id="PTHR32194">
    <property type="entry name" value="METALLOPROTEASE TLDD"/>
    <property type="match status" value="1"/>
</dbReference>
<dbReference type="Pfam" id="PF00227">
    <property type="entry name" value="Proteasome"/>
    <property type="match status" value="1"/>
</dbReference>
<dbReference type="PIRSF" id="PIRSF039093">
    <property type="entry name" value="HslV"/>
    <property type="match status" value="1"/>
</dbReference>
<dbReference type="SUPFAM" id="SSF56235">
    <property type="entry name" value="N-terminal nucleophile aminohydrolases (Ntn hydrolases)"/>
    <property type="match status" value="1"/>
</dbReference>
<dbReference type="PROSITE" id="PS51476">
    <property type="entry name" value="PROTEASOME_BETA_2"/>
    <property type="match status" value="1"/>
</dbReference>
<sequence length="182" mass="19124">MSESSLPSWHGTTILCLRKDGRVVIAGDGQVSLGATVIKGNARKVRKVGGGSILVGFAGATADAFTLLERLEAKLEKHPGQLTRACVELAKDWRTDRYLRRLEAMMAVADKDVSLVLTGQGDVLEPEDGIIGIGSGGNYALAAARALIDIDGLDAETIARKAMAIAAGICVYTNGNMIVESL</sequence>
<gene>
    <name evidence="1" type="primary">hslV</name>
    <name type="ordered locus">amb4536</name>
</gene>
<proteinExistence type="inferred from homology"/>
<keyword id="KW-0021">Allosteric enzyme</keyword>
<keyword id="KW-0963">Cytoplasm</keyword>
<keyword id="KW-0378">Hydrolase</keyword>
<keyword id="KW-0479">Metal-binding</keyword>
<keyword id="KW-0645">Protease</keyword>
<keyword id="KW-0915">Sodium</keyword>
<keyword id="KW-0888">Threonine protease</keyword>
<evidence type="ECO:0000255" key="1">
    <source>
        <dbReference type="HAMAP-Rule" id="MF_00248"/>
    </source>
</evidence>
<protein>
    <recommendedName>
        <fullName evidence="1">ATP-dependent protease subunit HslV</fullName>
        <ecNumber evidence="1">3.4.25.2</ecNumber>
    </recommendedName>
</protein>
<comment type="function">
    <text evidence="1">Protease subunit of a proteasome-like degradation complex believed to be a general protein degrading machinery.</text>
</comment>
<comment type="catalytic activity">
    <reaction evidence="1">
        <text>ATP-dependent cleavage of peptide bonds with broad specificity.</text>
        <dbReference type="EC" id="3.4.25.2"/>
    </reaction>
</comment>
<comment type="activity regulation">
    <text evidence="1">Allosterically activated by HslU binding.</text>
</comment>
<comment type="subunit">
    <text evidence="1">A double ring-shaped homohexamer of HslV is capped on each side by a ring-shaped HslU homohexamer. The assembly of the HslU/HslV complex is dependent on binding of ATP.</text>
</comment>
<comment type="subcellular location">
    <subcellularLocation>
        <location evidence="1">Cytoplasm</location>
    </subcellularLocation>
</comment>
<comment type="similarity">
    <text evidence="1">Belongs to the peptidase T1B family. HslV subfamily.</text>
</comment>
<name>HSLV_PARM1</name>
<organism>
    <name type="scientific">Paramagnetospirillum magneticum (strain ATCC 700264 / AMB-1)</name>
    <name type="common">Magnetospirillum magneticum</name>
    <dbReference type="NCBI Taxonomy" id="342108"/>
    <lineage>
        <taxon>Bacteria</taxon>
        <taxon>Pseudomonadati</taxon>
        <taxon>Pseudomonadota</taxon>
        <taxon>Alphaproteobacteria</taxon>
        <taxon>Rhodospirillales</taxon>
        <taxon>Magnetospirillaceae</taxon>
        <taxon>Paramagnetospirillum</taxon>
    </lineage>
</organism>
<feature type="chain" id="PRO_1000078423" description="ATP-dependent protease subunit HslV">
    <location>
        <begin position="1"/>
        <end position="182"/>
    </location>
</feature>
<feature type="active site" evidence="1">
    <location>
        <position position="12"/>
    </location>
</feature>
<feature type="binding site" evidence="1">
    <location>
        <position position="167"/>
    </location>
    <ligand>
        <name>Na(+)</name>
        <dbReference type="ChEBI" id="CHEBI:29101"/>
    </ligand>
</feature>
<feature type="binding site" evidence="1">
    <location>
        <position position="170"/>
    </location>
    <ligand>
        <name>Na(+)</name>
        <dbReference type="ChEBI" id="CHEBI:29101"/>
    </ligand>
</feature>
<feature type="binding site" evidence="1">
    <location>
        <position position="173"/>
    </location>
    <ligand>
        <name>Na(+)</name>
        <dbReference type="ChEBI" id="CHEBI:29101"/>
    </ligand>
</feature>
<reference key="1">
    <citation type="journal article" date="2005" name="DNA Res.">
        <title>Complete genome sequence of the facultative anaerobic magnetotactic bacterium Magnetospirillum sp. strain AMB-1.</title>
        <authorList>
            <person name="Matsunaga T."/>
            <person name="Okamura Y."/>
            <person name="Fukuda Y."/>
            <person name="Wahyudi A.T."/>
            <person name="Murase Y."/>
            <person name="Takeyama H."/>
        </authorList>
    </citation>
    <scope>NUCLEOTIDE SEQUENCE [LARGE SCALE GENOMIC DNA]</scope>
    <source>
        <strain>ATCC 700264 / AMB-1</strain>
    </source>
</reference>